<name>IBPA_SALPA</name>
<dbReference type="EMBL" id="CP000026">
    <property type="protein sequence ID" value="AAV79453.1"/>
    <property type="molecule type" value="Genomic_DNA"/>
</dbReference>
<dbReference type="RefSeq" id="WP_001532742.1">
    <property type="nucleotide sequence ID" value="NC_006511.1"/>
</dbReference>
<dbReference type="SMR" id="Q5PKS5"/>
<dbReference type="GeneID" id="84234411"/>
<dbReference type="KEGG" id="spt:SPA3659"/>
<dbReference type="HOGENOM" id="CLU_046737_4_2_6"/>
<dbReference type="Proteomes" id="UP000008185">
    <property type="component" value="Chromosome"/>
</dbReference>
<dbReference type="GO" id="GO:0005737">
    <property type="term" value="C:cytoplasm"/>
    <property type="evidence" value="ECO:0007669"/>
    <property type="project" value="UniProtKB-SubCell"/>
</dbReference>
<dbReference type="GO" id="GO:0050821">
    <property type="term" value="P:protein stabilization"/>
    <property type="evidence" value="ECO:0007669"/>
    <property type="project" value="UniProtKB-UniRule"/>
</dbReference>
<dbReference type="CDD" id="cd06470">
    <property type="entry name" value="ACD_IbpA-B_like"/>
    <property type="match status" value="1"/>
</dbReference>
<dbReference type="FunFam" id="2.60.40.790:FF:000002">
    <property type="entry name" value="Small heat shock protein IbpA"/>
    <property type="match status" value="1"/>
</dbReference>
<dbReference type="Gene3D" id="2.60.40.790">
    <property type="match status" value="1"/>
</dbReference>
<dbReference type="HAMAP" id="MF_02000">
    <property type="entry name" value="HSP20_IbpA"/>
    <property type="match status" value="1"/>
</dbReference>
<dbReference type="InterPro" id="IPR002068">
    <property type="entry name" value="A-crystallin/Hsp20_dom"/>
</dbReference>
<dbReference type="InterPro" id="IPR037913">
    <property type="entry name" value="ACD_IbpA/B"/>
</dbReference>
<dbReference type="InterPro" id="IPR008978">
    <property type="entry name" value="HSP20-like_chaperone"/>
</dbReference>
<dbReference type="InterPro" id="IPR023728">
    <property type="entry name" value="HSP20_IbpA"/>
</dbReference>
<dbReference type="NCBIfam" id="NF008013">
    <property type="entry name" value="PRK10743.1"/>
    <property type="match status" value="1"/>
</dbReference>
<dbReference type="PANTHER" id="PTHR47062">
    <property type="match status" value="1"/>
</dbReference>
<dbReference type="PANTHER" id="PTHR47062:SF1">
    <property type="entry name" value="SMALL HEAT SHOCK PROTEIN IBPA"/>
    <property type="match status" value="1"/>
</dbReference>
<dbReference type="Pfam" id="PF00011">
    <property type="entry name" value="HSP20"/>
    <property type="match status" value="1"/>
</dbReference>
<dbReference type="SUPFAM" id="SSF49764">
    <property type="entry name" value="HSP20-like chaperones"/>
    <property type="match status" value="1"/>
</dbReference>
<dbReference type="PROSITE" id="PS01031">
    <property type="entry name" value="SHSP"/>
    <property type="match status" value="1"/>
</dbReference>
<organism>
    <name type="scientific">Salmonella paratyphi A (strain ATCC 9150 / SARB42)</name>
    <dbReference type="NCBI Taxonomy" id="295319"/>
    <lineage>
        <taxon>Bacteria</taxon>
        <taxon>Pseudomonadati</taxon>
        <taxon>Pseudomonadota</taxon>
        <taxon>Gammaproteobacteria</taxon>
        <taxon>Enterobacterales</taxon>
        <taxon>Enterobacteriaceae</taxon>
        <taxon>Salmonella</taxon>
    </lineage>
</organism>
<gene>
    <name evidence="1" type="primary">ibpA</name>
    <name type="ordered locus">SPA3659</name>
</gene>
<feature type="chain" id="PRO_0000126022" description="Small heat shock protein IbpA">
    <location>
        <begin position="1"/>
        <end position="137"/>
    </location>
</feature>
<feature type="domain" description="sHSP" evidence="2">
    <location>
        <begin position="28"/>
        <end position="137"/>
    </location>
</feature>
<reference key="1">
    <citation type="journal article" date="2004" name="Nat. Genet.">
        <title>Comparison of genome degradation in Paratyphi A and Typhi, human-restricted serovars of Salmonella enterica that cause typhoid.</title>
        <authorList>
            <person name="McClelland M."/>
            <person name="Sanderson K.E."/>
            <person name="Clifton S.W."/>
            <person name="Latreille P."/>
            <person name="Porwollik S."/>
            <person name="Sabo A."/>
            <person name="Meyer R."/>
            <person name="Bieri T."/>
            <person name="Ozersky P."/>
            <person name="McLellan M."/>
            <person name="Harkins C.R."/>
            <person name="Wang C."/>
            <person name="Nguyen C."/>
            <person name="Berghoff A."/>
            <person name="Elliott G."/>
            <person name="Kohlberg S."/>
            <person name="Strong C."/>
            <person name="Du F."/>
            <person name="Carter J."/>
            <person name="Kremizki C."/>
            <person name="Layman D."/>
            <person name="Leonard S."/>
            <person name="Sun H."/>
            <person name="Fulton L."/>
            <person name="Nash W."/>
            <person name="Miner T."/>
            <person name="Minx P."/>
            <person name="Delehaunty K."/>
            <person name="Fronick C."/>
            <person name="Magrini V."/>
            <person name="Nhan M."/>
            <person name="Warren W."/>
            <person name="Florea L."/>
            <person name="Spieth J."/>
            <person name="Wilson R.K."/>
        </authorList>
    </citation>
    <scope>NUCLEOTIDE SEQUENCE [LARGE SCALE GENOMIC DNA]</scope>
    <source>
        <strain>ATCC 9150 / SARB42</strain>
    </source>
</reference>
<proteinExistence type="inferred from homology"/>
<protein>
    <recommendedName>
        <fullName evidence="1">Small heat shock protein IbpA</fullName>
    </recommendedName>
    <alternativeName>
        <fullName evidence="1">16 kDa heat shock protein A</fullName>
    </alternativeName>
</protein>
<sequence>MRNFDLSPLYRSAIGFDRLFNLLENNQSQSNGGYPPYNVELVDENHYRIAIAVAGFAESELEITAQDNLLVVKGAHADEQKERTYLYQGIAERNFERKFQLAENIHVRGANLVNGLLYIELERVIPEANKPRRIEIN</sequence>
<accession>Q5PKS5</accession>
<comment type="function">
    <text evidence="1">Associates with aggregated proteins, together with IbpB, to stabilize and protect them from irreversible denaturation and extensive proteolysis during heat shock and oxidative stress. Aggregated proteins bound to the IbpAB complex are more efficiently refolded and reactivated by the ATP-dependent chaperone systems ClpB and DnaK/DnaJ/GrpE. Its activity is ATP-independent.</text>
</comment>
<comment type="subunit">
    <text evidence="1">Monomer. Forms homomultimers of about 100-150 subunits at optimal growth temperatures. Conformation changes to monomers at high temperatures or high ionic concentrations.</text>
</comment>
<comment type="subcellular location">
    <subcellularLocation>
        <location evidence="1">Cytoplasm</location>
    </subcellularLocation>
</comment>
<comment type="similarity">
    <text evidence="1 2">Belongs to the small heat shock protein (HSP20) family.</text>
</comment>
<keyword id="KW-0143">Chaperone</keyword>
<keyword id="KW-0963">Cytoplasm</keyword>
<keyword id="KW-0346">Stress response</keyword>
<evidence type="ECO:0000255" key="1">
    <source>
        <dbReference type="HAMAP-Rule" id="MF_02000"/>
    </source>
</evidence>
<evidence type="ECO:0000255" key="2">
    <source>
        <dbReference type="PROSITE-ProRule" id="PRU00285"/>
    </source>
</evidence>